<reference key="1">
    <citation type="journal article" date="2005" name="J. Bacteriol.">
        <title>Insights on evolution of virulence and resistance from the complete genome analysis of an early methicillin-resistant Staphylococcus aureus strain and a biofilm-producing methicillin-resistant Staphylococcus epidermidis strain.</title>
        <authorList>
            <person name="Gill S.R."/>
            <person name="Fouts D.E."/>
            <person name="Archer G.L."/>
            <person name="Mongodin E.F."/>
            <person name="DeBoy R.T."/>
            <person name="Ravel J."/>
            <person name="Paulsen I.T."/>
            <person name="Kolonay J.F."/>
            <person name="Brinkac L.M."/>
            <person name="Beanan M.J."/>
            <person name="Dodson R.J."/>
            <person name="Daugherty S.C."/>
            <person name="Madupu R."/>
            <person name="Angiuoli S.V."/>
            <person name="Durkin A.S."/>
            <person name="Haft D.H."/>
            <person name="Vamathevan J.J."/>
            <person name="Khouri H."/>
            <person name="Utterback T.R."/>
            <person name="Lee C."/>
            <person name="Dimitrov G."/>
            <person name="Jiang L."/>
            <person name="Qin H."/>
            <person name="Weidman J."/>
            <person name="Tran K."/>
            <person name="Kang K.H."/>
            <person name="Hance I.R."/>
            <person name="Nelson K.E."/>
            <person name="Fraser C.M."/>
        </authorList>
    </citation>
    <scope>NUCLEOTIDE SEQUENCE [LARGE SCALE GENOMIC DNA]</scope>
    <source>
        <strain>COL</strain>
    </source>
</reference>
<gene>
    <name type="primary">aldA</name>
    <name type="ordered locus">SACOL0154</name>
</gene>
<sequence length="495" mass="53659">MAVNVRDYIAENYGLFINGEFVKGSSDETIEVTNPATGETLSHITRAKDKDVDHAVKVAQEAFESWSLTSKSERAQMLRDIGDKLMAQKDKIAMIETLNNGKPIRETTAIDIPFAARHFHYFASVIETEEGTVNDIDKDTMSIVRHEPIGVVGAVVAWNFPMLLAAWKIAPAIAAGNTIVIQPSSSTPLSLLEVAKIFQEVLPKGVVNILTGKGSESGNAIFNHDGVDKLSFTGSTDVGYQVAEAAAKHLVPATLELGGKSANIILDDANLDLAVEGIQLGILFNQGEVCSAGSRLLVHEKIYDQLVPRLQEAFSNIKVGNPQDEATQMGSQTGKDQLDKIQSYIDAAKESDAQILAGGHRLTENGLDKGFFFEPTLIAVPDNHHKLAQEEIFGPVLTVIKVKDDQEAIDIANDSEYGLAGGVFSQNITRALNIAKAVRTGRIWINTYNQVPEGAPFGGYKKSGIGRETYKGALSNYQQVKNIYIDTSNALKGLY</sequence>
<dbReference type="EC" id="1.2.1.3"/>
<dbReference type="EMBL" id="CP000046">
    <property type="protein sequence ID" value="AAW37451.1"/>
    <property type="molecule type" value="Genomic_DNA"/>
</dbReference>
<dbReference type="RefSeq" id="WP_000290400.1">
    <property type="nucleotide sequence ID" value="NZ_JBGOFO010000001.1"/>
</dbReference>
<dbReference type="SMR" id="Q5HJK3"/>
<dbReference type="KEGG" id="sac:SACOL0154"/>
<dbReference type="HOGENOM" id="CLU_005391_0_2_9"/>
<dbReference type="Proteomes" id="UP000000530">
    <property type="component" value="Chromosome"/>
</dbReference>
<dbReference type="GO" id="GO:0004029">
    <property type="term" value="F:aldehyde dehydrogenase (NAD+) activity"/>
    <property type="evidence" value="ECO:0007669"/>
    <property type="project" value="UniProtKB-EC"/>
</dbReference>
<dbReference type="CDD" id="cd07117">
    <property type="entry name" value="ALDH_StaphAldA1"/>
    <property type="match status" value="1"/>
</dbReference>
<dbReference type="FunFam" id="3.40.309.10:FF:000012">
    <property type="entry name" value="Betaine aldehyde dehydrogenase"/>
    <property type="match status" value="1"/>
</dbReference>
<dbReference type="FunFam" id="3.40.605.10:FF:000007">
    <property type="entry name" value="NAD/NADP-dependent betaine aldehyde dehydrogenase"/>
    <property type="match status" value="1"/>
</dbReference>
<dbReference type="Gene3D" id="3.40.605.10">
    <property type="entry name" value="Aldehyde Dehydrogenase, Chain A, domain 1"/>
    <property type="match status" value="1"/>
</dbReference>
<dbReference type="Gene3D" id="3.40.309.10">
    <property type="entry name" value="Aldehyde Dehydrogenase, Chain A, domain 2"/>
    <property type="match status" value="1"/>
</dbReference>
<dbReference type="InterPro" id="IPR016161">
    <property type="entry name" value="Ald_DH/histidinol_DH"/>
</dbReference>
<dbReference type="InterPro" id="IPR016163">
    <property type="entry name" value="Ald_DH_C"/>
</dbReference>
<dbReference type="InterPro" id="IPR016160">
    <property type="entry name" value="Ald_DH_CS_CYS"/>
</dbReference>
<dbReference type="InterPro" id="IPR029510">
    <property type="entry name" value="Ald_DH_CS_GLU"/>
</dbReference>
<dbReference type="InterPro" id="IPR016162">
    <property type="entry name" value="Ald_DH_N"/>
</dbReference>
<dbReference type="InterPro" id="IPR015590">
    <property type="entry name" value="Aldehyde_DH_dom"/>
</dbReference>
<dbReference type="PANTHER" id="PTHR43111">
    <property type="entry name" value="ALDEHYDE DEHYDROGENASE B-RELATED"/>
    <property type="match status" value="1"/>
</dbReference>
<dbReference type="PANTHER" id="PTHR43111:SF1">
    <property type="entry name" value="ALDEHYDE DEHYDROGENASE B-RELATED"/>
    <property type="match status" value="1"/>
</dbReference>
<dbReference type="Pfam" id="PF00171">
    <property type="entry name" value="Aldedh"/>
    <property type="match status" value="1"/>
</dbReference>
<dbReference type="SUPFAM" id="SSF53720">
    <property type="entry name" value="ALDH-like"/>
    <property type="match status" value="1"/>
</dbReference>
<dbReference type="PROSITE" id="PS00070">
    <property type="entry name" value="ALDEHYDE_DEHYDR_CYS"/>
    <property type="match status" value="1"/>
</dbReference>
<dbReference type="PROSITE" id="PS00687">
    <property type="entry name" value="ALDEHYDE_DEHYDR_GLU"/>
    <property type="match status" value="1"/>
</dbReference>
<accession>Q5HJK3</accession>
<comment type="catalytic activity">
    <reaction>
        <text>an aldehyde + NAD(+) + H2O = a carboxylate + NADH + 2 H(+)</text>
        <dbReference type="Rhea" id="RHEA:16185"/>
        <dbReference type="ChEBI" id="CHEBI:15377"/>
        <dbReference type="ChEBI" id="CHEBI:15378"/>
        <dbReference type="ChEBI" id="CHEBI:17478"/>
        <dbReference type="ChEBI" id="CHEBI:29067"/>
        <dbReference type="ChEBI" id="CHEBI:57540"/>
        <dbReference type="ChEBI" id="CHEBI:57945"/>
        <dbReference type="EC" id="1.2.1.3"/>
    </reaction>
</comment>
<comment type="similarity">
    <text evidence="2">Belongs to the aldehyde dehydrogenase family.</text>
</comment>
<evidence type="ECO:0000250" key="1"/>
<evidence type="ECO:0000305" key="2"/>
<proteinExistence type="inferred from homology"/>
<organism>
    <name type="scientific">Staphylococcus aureus (strain COL)</name>
    <dbReference type="NCBI Taxonomy" id="93062"/>
    <lineage>
        <taxon>Bacteria</taxon>
        <taxon>Bacillati</taxon>
        <taxon>Bacillota</taxon>
        <taxon>Bacilli</taxon>
        <taxon>Bacillales</taxon>
        <taxon>Staphylococcaceae</taxon>
        <taxon>Staphylococcus</taxon>
    </lineage>
</organism>
<protein>
    <recommendedName>
        <fullName>Putative aldehyde dehydrogenase AldA</fullName>
        <ecNumber>1.2.1.3</ecNumber>
    </recommendedName>
</protein>
<feature type="chain" id="PRO_0000056455" description="Putative aldehyde dehydrogenase AldA">
    <location>
        <begin position="1"/>
        <end position="495"/>
    </location>
</feature>
<feature type="active site" evidence="1">
    <location>
        <position position="256"/>
    </location>
</feature>
<feature type="active site" evidence="1">
    <location>
        <position position="290"/>
    </location>
</feature>
<feature type="binding site" evidence="1">
    <location>
        <begin position="212"/>
        <end position="218"/>
    </location>
    <ligand>
        <name>NAD(+)</name>
        <dbReference type="ChEBI" id="CHEBI:57540"/>
    </ligand>
</feature>
<keyword id="KW-0520">NAD</keyword>
<keyword id="KW-0560">Oxidoreductase</keyword>
<name>ALDA_STAAC</name>